<dbReference type="EC" id="2.7.2.15" evidence="2"/>
<dbReference type="EMBL" id="AM498294">
    <property type="protein sequence ID" value="CAM57302.1"/>
    <property type="molecule type" value="Genomic_DNA"/>
</dbReference>
<dbReference type="SMR" id="B1VB81"/>
<dbReference type="UniPathway" id="UPA00621"/>
<dbReference type="GO" id="GO:0005737">
    <property type="term" value="C:cytoplasm"/>
    <property type="evidence" value="ECO:0007669"/>
    <property type="project" value="UniProtKB-SubCell"/>
</dbReference>
<dbReference type="GO" id="GO:0008776">
    <property type="term" value="F:acetate kinase activity"/>
    <property type="evidence" value="ECO:0007669"/>
    <property type="project" value="TreeGrafter"/>
</dbReference>
<dbReference type="GO" id="GO:0005524">
    <property type="term" value="F:ATP binding"/>
    <property type="evidence" value="ECO:0007669"/>
    <property type="project" value="UniProtKB-KW"/>
</dbReference>
<dbReference type="GO" id="GO:0008980">
    <property type="term" value="F:propionate kinase activity"/>
    <property type="evidence" value="ECO:0007669"/>
    <property type="project" value="UniProtKB-UniRule"/>
</dbReference>
<dbReference type="GO" id="GO:0006083">
    <property type="term" value="P:acetate metabolic process"/>
    <property type="evidence" value="ECO:0007669"/>
    <property type="project" value="TreeGrafter"/>
</dbReference>
<dbReference type="GO" id="GO:0051144">
    <property type="term" value="P:propanediol catabolic process"/>
    <property type="evidence" value="ECO:0007669"/>
    <property type="project" value="UniProtKB-UniPathway"/>
</dbReference>
<dbReference type="GO" id="GO:0019543">
    <property type="term" value="P:propionate catabolic process"/>
    <property type="evidence" value="ECO:0007669"/>
    <property type="project" value="InterPro"/>
</dbReference>
<dbReference type="CDD" id="cd24010">
    <property type="entry name" value="ASKHA_NBD_AcK_PK"/>
    <property type="match status" value="1"/>
</dbReference>
<dbReference type="Gene3D" id="3.30.420.40">
    <property type="match status" value="2"/>
</dbReference>
<dbReference type="HAMAP" id="MF_00020">
    <property type="entry name" value="Acetate_kinase"/>
    <property type="match status" value="1"/>
</dbReference>
<dbReference type="HAMAP" id="MF_01882">
    <property type="entry name" value="Propion_kin_subfam2"/>
    <property type="match status" value="1"/>
</dbReference>
<dbReference type="InterPro" id="IPR004372">
    <property type="entry name" value="Ac/propionate_kinase"/>
</dbReference>
<dbReference type="InterPro" id="IPR000890">
    <property type="entry name" value="Aliphatic_acid_kin_short-chain"/>
</dbReference>
<dbReference type="InterPro" id="IPR023865">
    <property type="entry name" value="Aliphatic_acid_kinase_CS"/>
</dbReference>
<dbReference type="InterPro" id="IPR043129">
    <property type="entry name" value="ATPase_NBD"/>
</dbReference>
<dbReference type="InterPro" id="IPR024896">
    <property type="entry name" value="Propionate_kinase_PduW"/>
</dbReference>
<dbReference type="NCBIfam" id="TIGR00016">
    <property type="entry name" value="ackA"/>
    <property type="match status" value="1"/>
</dbReference>
<dbReference type="NCBIfam" id="NF009063">
    <property type="entry name" value="PRK12397.1"/>
    <property type="match status" value="1"/>
</dbReference>
<dbReference type="PANTHER" id="PTHR21060">
    <property type="entry name" value="ACETATE KINASE"/>
    <property type="match status" value="1"/>
</dbReference>
<dbReference type="PANTHER" id="PTHR21060:SF15">
    <property type="entry name" value="ACETATE KINASE-RELATED"/>
    <property type="match status" value="1"/>
</dbReference>
<dbReference type="Pfam" id="PF00871">
    <property type="entry name" value="Acetate_kinase"/>
    <property type="match status" value="1"/>
</dbReference>
<dbReference type="PIRSF" id="PIRSF000722">
    <property type="entry name" value="Acetate_prop_kin"/>
    <property type="match status" value="1"/>
</dbReference>
<dbReference type="PRINTS" id="PR00471">
    <property type="entry name" value="ACETATEKNASE"/>
</dbReference>
<dbReference type="SUPFAM" id="SSF53067">
    <property type="entry name" value="Actin-like ATPase domain"/>
    <property type="match status" value="2"/>
</dbReference>
<dbReference type="PROSITE" id="PS01075">
    <property type="entry name" value="ACETATE_KINASE_1"/>
    <property type="match status" value="1"/>
</dbReference>
<dbReference type="PROSITE" id="PS01076">
    <property type="entry name" value="ACETATE_KINASE_2"/>
    <property type="match status" value="1"/>
</dbReference>
<accession>B1VB81</accession>
<keyword id="KW-0067">ATP-binding</keyword>
<keyword id="KW-0963">Cytoplasm</keyword>
<keyword id="KW-0418">Kinase</keyword>
<keyword id="KW-0547">Nucleotide-binding</keyword>
<keyword id="KW-0808">Transferase</keyword>
<name>PDUW_CITFR</name>
<organism>
    <name type="scientific">Citrobacter freundii</name>
    <dbReference type="NCBI Taxonomy" id="546"/>
    <lineage>
        <taxon>Bacteria</taxon>
        <taxon>Pseudomonadati</taxon>
        <taxon>Pseudomonadota</taxon>
        <taxon>Gammaproteobacteria</taxon>
        <taxon>Enterobacterales</taxon>
        <taxon>Enterobacteriaceae</taxon>
        <taxon>Citrobacter</taxon>
        <taxon>Citrobacter freundii complex</taxon>
    </lineage>
</organism>
<protein>
    <recommendedName>
        <fullName evidence="2 4">Propionate kinase</fullName>
        <ecNumber evidence="2">2.7.2.15</ecNumber>
    </recommendedName>
</protein>
<reference key="1">
    <citation type="journal article" date="2008" name="J. Biol. Chem.">
        <title>Biochemical and Structural Insights into Bacterial Organelle Form and Biogenesis.</title>
        <authorList>
            <person name="Parsons J.B."/>
            <person name="Dinesh S.D."/>
            <person name="Deery E."/>
            <person name="Leech H.K."/>
            <person name="Brindley A.A."/>
            <person name="Heldt D."/>
            <person name="Frank S."/>
            <person name="Smales C.M."/>
            <person name="Lunsdorf H."/>
            <person name="Rambach A."/>
            <person name="Gass M.H."/>
            <person name="Bleloch A."/>
            <person name="McClean K.J."/>
            <person name="Munro A.W."/>
            <person name="Rigby S.E.J."/>
            <person name="Warren M.J."/>
            <person name="Prentice M.B."/>
        </authorList>
    </citation>
    <scope>NUCLEOTIDE SEQUENCE [GENOMIC DNA]</scope>
    <scope>FUNCTION</scope>
    <scope>PATHWAY</scope>
</reference>
<comment type="function">
    <text evidence="1">Works with phosphate acetyltransferase (pta) to capture exogenous propionate and regenerate propionyl-CoA during degradation of 1,2-propanediol (1,2-PD).</text>
</comment>
<comment type="function">
    <text evidence="3">Expression of a cosmid containing the full 21-gene pdu operon in E.coli allows E.coli to grow on 1,2-propanediol (1,2-PD) with the appearance of bacterial microcompartments (BMC) in its cytoplasm.</text>
</comment>
<comment type="catalytic activity">
    <reaction evidence="2">
        <text>propanoate + ATP = propanoyl phosphate + ADP</text>
        <dbReference type="Rhea" id="RHEA:23148"/>
        <dbReference type="ChEBI" id="CHEBI:17272"/>
        <dbReference type="ChEBI" id="CHEBI:30616"/>
        <dbReference type="ChEBI" id="CHEBI:58933"/>
        <dbReference type="ChEBI" id="CHEBI:456216"/>
        <dbReference type="EC" id="2.7.2.15"/>
    </reaction>
</comment>
<comment type="pathway">
    <text evidence="3">Polyol metabolism; 1,2-propanediol degradation.</text>
</comment>
<comment type="subcellular location">
    <subcellularLocation>
        <location evidence="2">Cytoplasm</location>
    </subcellularLocation>
</comment>
<comment type="similarity">
    <text evidence="2">Belongs to the acetokinase family. PduW subfamily.</text>
</comment>
<feature type="chain" id="PRO_0000454287" description="Propionate kinase">
    <location>
        <begin position="1"/>
        <end position="404"/>
    </location>
</feature>
<proteinExistence type="inferred from homology"/>
<sequence length="404" mass="43635">MSHKIMAINAGSSSLKFQLLAMPQGEMICQGLIERIGMSDAQVTLKAPAQKWQETLPVADHREAVTLLLEKLLSHNIISSLEEIDGVGHRVAHGGESFKDSARVTDETLAEIERLAELAPLHNPVNALGIAVFRQLLPKTPAVAVFDTAFHQTLDEPSFIYPLPWRYYSELGIRRYGFHGTSHKYVSAQLAEKLGVPLSALRVVCCHLGNGSSICAIKGGHSVNTSMGFTPQSGVMMGTRSGDIDPSILPWIALREGKTPQQLNQLLNNESGLLGVSGVSPDYRDVEHAADTGNHQAALALTLFAERIRATIGSYIMQMGGLDALVFTGGIGENSARARAAICHNLNFLGLAVDEEKNQRNATFIQTENAVVKVAVINTNEELMIAQDVMRLAISETVTLGIPA</sequence>
<gene>
    <name evidence="2 4" type="primary">pduW</name>
</gene>
<evidence type="ECO:0000250" key="1">
    <source>
        <dbReference type="UniProtKB" id="P74879"/>
    </source>
</evidence>
<evidence type="ECO:0000255" key="2">
    <source>
        <dbReference type="HAMAP-Rule" id="MF_01882"/>
    </source>
</evidence>
<evidence type="ECO:0000269" key="3">
    <source>
    </source>
</evidence>
<evidence type="ECO:0000303" key="4">
    <source>
    </source>
</evidence>